<gene>
    <name evidence="5" type="primary">hasG</name>
    <name type="ORF">AFUB_036240</name>
</gene>
<organism>
    <name type="scientific">Aspergillus fumigatus (strain CBS 144.89 / FGSC A1163 / CEA10)</name>
    <name type="common">Neosartorya fumigata</name>
    <dbReference type="NCBI Taxonomy" id="451804"/>
    <lineage>
        <taxon>Eukaryota</taxon>
        <taxon>Fungi</taxon>
        <taxon>Dikarya</taxon>
        <taxon>Ascomycota</taxon>
        <taxon>Pezizomycotina</taxon>
        <taxon>Eurotiomycetes</taxon>
        <taxon>Eurotiomycetidae</taxon>
        <taxon>Eurotiales</taxon>
        <taxon>Aspergillaceae</taxon>
        <taxon>Aspergillus</taxon>
        <taxon>Aspergillus subgen. Fumigati</taxon>
    </lineage>
</organism>
<keyword id="KW-0274">FAD</keyword>
<keyword id="KW-0285">Flavoprotein</keyword>
<keyword id="KW-0560">Oxidoreductase</keyword>
<keyword id="KW-0843">Virulence</keyword>
<reference key="1">
    <citation type="journal article" date="2008" name="PLoS Genet.">
        <title>Genomic islands in the pathogenic filamentous fungus Aspergillus fumigatus.</title>
        <authorList>
            <person name="Fedorova N.D."/>
            <person name="Khaldi N."/>
            <person name="Joardar V.S."/>
            <person name="Maiti R."/>
            <person name="Amedeo P."/>
            <person name="Anderson M.J."/>
            <person name="Crabtree J."/>
            <person name="Silva J.C."/>
            <person name="Badger J.H."/>
            <person name="Albarraq A."/>
            <person name="Angiuoli S."/>
            <person name="Bussey H."/>
            <person name="Bowyer P."/>
            <person name="Cotty P.J."/>
            <person name="Dyer P.S."/>
            <person name="Egan A."/>
            <person name="Galens K."/>
            <person name="Fraser-Liggett C.M."/>
            <person name="Haas B.J."/>
            <person name="Inman J.M."/>
            <person name="Kent R."/>
            <person name="Lemieux S."/>
            <person name="Malavazi I."/>
            <person name="Orvis J."/>
            <person name="Roemer T."/>
            <person name="Ronning C.M."/>
            <person name="Sundaram J.P."/>
            <person name="Sutton G."/>
            <person name="Turner G."/>
            <person name="Venter J.C."/>
            <person name="White O.R."/>
            <person name="Whitty B.R."/>
            <person name="Youngman P."/>
            <person name="Wolfe K.H."/>
            <person name="Goldman G.H."/>
            <person name="Wortman J.R."/>
            <person name="Jiang B."/>
            <person name="Denning D.W."/>
            <person name="Nierman W.C."/>
        </authorList>
    </citation>
    <scope>NUCLEOTIDE SEQUENCE [LARGE SCALE GENOMIC DNA]</scope>
    <source>
        <strain>CBS 144.89 / FGSC A1163 / CEA10</strain>
    </source>
</reference>
<reference key="2">
    <citation type="journal article" date="2013" name="J. Am. Chem. Soc.">
        <title>A nonribosomal peptide synthetase-derived iron(III) complex from the pathogenic fungus Aspergillus fumigatus.</title>
        <authorList>
            <person name="Yin W.B."/>
            <person name="Baccile J.A."/>
            <person name="Bok J.W."/>
            <person name="Chen Y."/>
            <person name="Keller N.P."/>
            <person name="Schroeder F.C."/>
        </authorList>
    </citation>
    <scope>FUNCTION</scope>
    <scope>DISRUPTION PHENOTYPE</scope>
    <scope>PATHWAY</scope>
</reference>
<reference key="3">
    <citation type="journal article" date="2022" name="J. Fungi">
        <title>Stress responses elicited by glucose withdrawal in Aspergillus fumigatus.</title>
        <authorList>
            <person name="Emri T."/>
            <person name="Antal K."/>
            <person name="Gila B."/>
            <person name="Jonas A.P."/>
            <person name="Pocsi I."/>
        </authorList>
    </citation>
    <scope>INDUCTION</scope>
</reference>
<comment type="function">
    <text evidence="3">FAD-linked oxidoreductase; part of the gene cluster that mediates the biosynthesis of hexadehydro-astechrome (HAS), a tryptophan-derived iron(III)-complex that acts as a virulence factor in infected mice (PubMed:23360537). Within the pathway, hasG converts the prenyl to a methylbutadienyl side chain (PubMed:23360537). The HAS biosynthesis begins with the synthesis of a tethered Trp-Ala dipeptide by the NRPS hasD. The 7-dimethylallyltryptophan synthase hasE then catalyzes the prenylation of the hasD-tethered tryptophan or the resulting tethered Trp-Ala dipeptide at the C-7 position of the indole moiety. HAS biosynthesis continues via tethered intermediates with the succesive actions of the cytochrome P450 monooxygenase hasH, the O-methyltransferase hasC, and the FAD-linked oxidoreductase hasG. The resulting O-methylated diketopiperazine is then released from hasD. Finally, three O-methylated diketopiperazine molecules assemble in a trimeric complex with Fe(III) to produce hexadehydro-astechrome (PubMed:23360537).</text>
</comment>
<comment type="cofactor">
    <cofactor evidence="1">
        <name>FAD</name>
        <dbReference type="ChEBI" id="CHEBI:57692"/>
    </cofactor>
</comment>
<comment type="pathway">
    <text evidence="3">Secondary metabolite biosynthesis.</text>
</comment>
<comment type="induction">
    <text evidence="4">The expression of the hexadehydro-astechrome cluster is induced by glucose.</text>
</comment>
<comment type="disruption phenotype">
    <text evidence="3">Accumulates astechrome instead of hexadehydro-astechrome.</text>
</comment>
<comment type="similarity">
    <text evidence="6">Belongs to the oxygen-dependent FAD-linked oxidoreductase family.</text>
</comment>
<dbReference type="EC" id="1.1.1.-" evidence="7"/>
<dbReference type="EMBL" id="DS499596">
    <property type="protein sequence ID" value="EDP52458.1"/>
    <property type="molecule type" value="Genomic_DNA"/>
</dbReference>
<dbReference type="SMR" id="B0XWK5"/>
<dbReference type="EnsemblFungi" id="EDP52458">
    <property type="protein sequence ID" value="EDP52458"/>
    <property type="gene ID" value="AFUB_036240"/>
</dbReference>
<dbReference type="VEuPathDB" id="FungiDB:AFUB_036240"/>
<dbReference type="HOGENOM" id="CLU_018354_10_0_1"/>
<dbReference type="OrthoDB" id="68856at5052"/>
<dbReference type="PhylomeDB" id="B0XWK5"/>
<dbReference type="Proteomes" id="UP000001699">
    <property type="component" value="Unassembled WGS sequence"/>
</dbReference>
<dbReference type="GO" id="GO:0071949">
    <property type="term" value="F:FAD binding"/>
    <property type="evidence" value="ECO:0007669"/>
    <property type="project" value="InterPro"/>
</dbReference>
<dbReference type="GO" id="GO:0016491">
    <property type="term" value="F:oxidoreductase activity"/>
    <property type="evidence" value="ECO:0007669"/>
    <property type="project" value="UniProtKB-KW"/>
</dbReference>
<dbReference type="FunFam" id="3.40.462.20:FF:000004">
    <property type="entry name" value="FAD binding domain protein"/>
    <property type="match status" value="1"/>
</dbReference>
<dbReference type="Gene3D" id="3.30.465.10">
    <property type="match status" value="1"/>
</dbReference>
<dbReference type="Gene3D" id="3.40.462.20">
    <property type="match status" value="1"/>
</dbReference>
<dbReference type="Gene3D" id="3.30.43.10">
    <property type="entry name" value="Uridine Diphospho-n-acetylenolpyruvylglucosamine Reductase, domain 2"/>
    <property type="match status" value="1"/>
</dbReference>
<dbReference type="InterPro" id="IPR016166">
    <property type="entry name" value="FAD-bd_PCMH"/>
</dbReference>
<dbReference type="InterPro" id="IPR036318">
    <property type="entry name" value="FAD-bd_PCMH-like_sf"/>
</dbReference>
<dbReference type="InterPro" id="IPR016167">
    <property type="entry name" value="FAD-bd_PCMH_sub1"/>
</dbReference>
<dbReference type="InterPro" id="IPR016169">
    <property type="entry name" value="FAD-bd_PCMH_sub2"/>
</dbReference>
<dbReference type="InterPro" id="IPR050416">
    <property type="entry name" value="FAD-linked_Oxidoreductase"/>
</dbReference>
<dbReference type="InterPro" id="IPR006094">
    <property type="entry name" value="Oxid_FAD_bind_N"/>
</dbReference>
<dbReference type="PANTHER" id="PTHR42973">
    <property type="entry name" value="BINDING OXIDOREDUCTASE, PUTATIVE (AFU_ORTHOLOGUE AFUA_1G17690)-RELATED"/>
    <property type="match status" value="1"/>
</dbReference>
<dbReference type="PANTHER" id="PTHR42973:SF7">
    <property type="entry name" value="FAD-BINDING PCMH-TYPE DOMAIN-CONTAINING PROTEIN"/>
    <property type="match status" value="1"/>
</dbReference>
<dbReference type="Pfam" id="PF01565">
    <property type="entry name" value="FAD_binding_4"/>
    <property type="match status" value="1"/>
</dbReference>
<dbReference type="SUPFAM" id="SSF56176">
    <property type="entry name" value="FAD-binding/transporter-associated domain-like"/>
    <property type="match status" value="1"/>
</dbReference>
<dbReference type="PROSITE" id="PS51387">
    <property type="entry name" value="FAD_PCMH"/>
    <property type="match status" value="1"/>
</dbReference>
<protein>
    <recommendedName>
        <fullName evidence="5">FAD-linked oxidoreductase hasG</fullName>
        <ecNumber evidence="7">1.1.1.-</ecNumber>
    </recommendedName>
    <alternativeName>
        <fullName evidence="5">Hexadehydro-astechrome biosynthesis cluster protein G</fullName>
    </alternativeName>
</protein>
<proteinExistence type="evidence at transcript level"/>
<feature type="chain" id="PRO_0000461230" description="FAD-linked oxidoreductase hasG">
    <location>
        <begin position="1"/>
        <end position="468"/>
    </location>
</feature>
<feature type="domain" description="FAD-binding PCMH-type" evidence="2">
    <location>
        <begin position="37"/>
        <end position="211"/>
    </location>
</feature>
<accession>B0XWK5</accession>
<name>HASG_ASPFC</name>
<sequence length="468" mass="50571">MASNPKSDLLNCLSGSNVIVDGDEAWPDAIKRWTGYLGKIPAAVVQVTSEEDVIAAVSYAVQNQRPFVVRGGGHSNGFSTVDSPGIIIDLSRMRKVTVDVERQVVVAQGGATMGDGVKAASSVGMAVATGTCNEVGLIGATLGGGIGRLLGHVGYAADTVLSMRVVVVDQSGVARAVEASPDVNSDLFWGLRGSGHLFGVVVEATFRAYPWTHDTWHSCLVFPPSDAGLVAEAVEKVHYQGGMQGRLVFCAPNKQPIVLLQMWYMGSHEEAASKFQPLLELPSMTDHPLNFVGRRIPYPNLNDSSDRICGYGGRKNLAAFGLKNLSAGACVAALNVYMDFIVQHPEAAQTHVLTEFYSMDVARQLDQDGQETSIPGEFRREVKYWVMPLAWYDDPALDDACAGLNKAIREAFLTQHDGTRARGVGYVNMPFEDDTTTSVFGEGERLERLRNLKLKWDPLGVVQGIVKL</sequence>
<evidence type="ECO:0000250" key="1">
    <source>
        <dbReference type="UniProtKB" id="Q5BEJ5"/>
    </source>
</evidence>
<evidence type="ECO:0000255" key="2">
    <source>
        <dbReference type="PROSITE-ProRule" id="PRU00718"/>
    </source>
</evidence>
<evidence type="ECO:0000269" key="3">
    <source>
    </source>
</evidence>
<evidence type="ECO:0000269" key="4">
    <source>
    </source>
</evidence>
<evidence type="ECO:0000303" key="5">
    <source>
    </source>
</evidence>
<evidence type="ECO:0000305" key="6"/>
<evidence type="ECO:0000305" key="7">
    <source>
    </source>
</evidence>